<gene>
    <name evidence="1" type="primary">psd</name>
    <name type="ordered locus">ECP_4404</name>
</gene>
<organism>
    <name type="scientific">Escherichia coli O6:K15:H31 (strain 536 / UPEC)</name>
    <dbReference type="NCBI Taxonomy" id="362663"/>
    <lineage>
        <taxon>Bacteria</taxon>
        <taxon>Pseudomonadati</taxon>
        <taxon>Pseudomonadota</taxon>
        <taxon>Gammaproteobacteria</taxon>
        <taxon>Enterobacterales</taxon>
        <taxon>Enterobacteriaceae</taxon>
        <taxon>Escherichia</taxon>
    </lineage>
</organism>
<sequence length="322" mass="35934">MLNSFKLSLQYILPKLWLTRLAGWGASKRAGWLTKLVIDLFVKYYKVDMKEAQKPDTASYRTFNEFFVRPLRDEVRPIDTDPNVLVMPADGVISQLGKIEEDKILQAKGHNYSLEALLAGNYLMADLFRNGTFVTTYLSPRDYHRVHMPCNGILREMIYVPGDLFSVNHLTAQNVPNLFARNERVICLFDTEFGPMAQILVGATIVGSIETVWAGTITPPREGIIKRWTWPAGENDGSVALLKGQEMGRFKLGSTVINLFAPGKVNLVEQLESLSVTKIGQPLAVSTETFVTPDAEPAPLPAEEIEAEHDASPLVDDKKDQV</sequence>
<feature type="chain" id="PRO_0000262107" description="Phosphatidylserine decarboxylase beta chain" evidence="1">
    <location>
        <begin position="1"/>
        <end position="253"/>
    </location>
</feature>
<feature type="chain" id="PRO_0000262108" description="Phosphatidylserine decarboxylase alpha chain" evidence="1">
    <location>
        <begin position="254"/>
        <end position="322"/>
    </location>
</feature>
<feature type="region of interest" description="Disordered" evidence="2">
    <location>
        <begin position="293"/>
        <end position="322"/>
    </location>
</feature>
<feature type="compositionally biased region" description="Basic and acidic residues" evidence="2">
    <location>
        <begin position="308"/>
        <end position="322"/>
    </location>
</feature>
<feature type="active site" description="Charge relay system; for autoendoproteolytic cleavage activity" evidence="1">
    <location>
        <position position="90"/>
    </location>
</feature>
<feature type="active site" description="Charge relay system; for autoendoproteolytic cleavage activity" evidence="1">
    <location>
        <position position="147"/>
    </location>
</feature>
<feature type="active site" description="Charge relay system; for autoendoproteolytic cleavage activity" evidence="1">
    <location>
        <position position="254"/>
    </location>
</feature>
<feature type="active site" description="Schiff-base intermediate with substrate; via pyruvic acid; for decarboxylase activity" evidence="1">
    <location>
        <position position="254"/>
    </location>
</feature>
<feature type="site" description="Cleavage (non-hydrolytic); by autocatalysis" evidence="1">
    <location>
        <begin position="253"/>
        <end position="254"/>
    </location>
</feature>
<feature type="modified residue" description="Pyruvic acid (Ser); by autocatalysis" evidence="1">
    <location>
        <position position="254"/>
    </location>
</feature>
<protein>
    <recommendedName>
        <fullName evidence="1">Phosphatidylserine decarboxylase proenzyme</fullName>
        <ecNumber evidence="1">4.1.1.65</ecNumber>
    </recommendedName>
    <component>
        <recommendedName>
            <fullName evidence="1">Phosphatidylserine decarboxylase alpha chain</fullName>
        </recommendedName>
    </component>
    <component>
        <recommendedName>
            <fullName evidence="1">Phosphatidylserine decarboxylase beta chain</fullName>
        </recommendedName>
    </component>
</protein>
<comment type="function">
    <text evidence="1">Catalyzes the formation of phosphatidylethanolamine (PtdEtn) from phosphatidylserine (PtdSer).</text>
</comment>
<comment type="catalytic activity">
    <reaction evidence="1">
        <text>a 1,2-diacyl-sn-glycero-3-phospho-L-serine + H(+) = a 1,2-diacyl-sn-glycero-3-phosphoethanolamine + CO2</text>
        <dbReference type="Rhea" id="RHEA:20828"/>
        <dbReference type="ChEBI" id="CHEBI:15378"/>
        <dbReference type="ChEBI" id="CHEBI:16526"/>
        <dbReference type="ChEBI" id="CHEBI:57262"/>
        <dbReference type="ChEBI" id="CHEBI:64612"/>
        <dbReference type="EC" id="4.1.1.65"/>
    </reaction>
</comment>
<comment type="cofactor">
    <cofactor evidence="1">
        <name>pyruvate</name>
        <dbReference type="ChEBI" id="CHEBI:15361"/>
    </cofactor>
    <text evidence="1">Binds 1 pyruvoyl group covalently per subunit.</text>
</comment>
<comment type="pathway">
    <text evidence="1">Phospholipid metabolism; phosphatidylethanolamine biosynthesis; phosphatidylethanolamine from CDP-diacylglycerol: step 2/2.</text>
</comment>
<comment type="subunit">
    <text evidence="1">Heterodimer of a large membrane-associated beta subunit and a small pyruvoyl-containing alpha subunit.</text>
</comment>
<comment type="subcellular location">
    <subcellularLocation>
        <location evidence="1">Cell membrane</location>
        <topology evidence="1">Peripheral membrane protein</topology>
    </subcellularLocation>
</comment>
<comment type="PTM">
    <text evidence="1">Is synthesized initially as an inactive proenzyme. Formation of the active enzyme involves a self-maturation process in which the active site pyruvoyl group is generated from an internal serine residue via an autocatalytic post-translational modification. Two non-identical subunits are generated from the proenzyme in this reaction, and the pyruvate is formed at the N-terminus of the alpha chain, which is derived from the carboxyl end of the proenzyme. The autoendoproteolytic cleavage occurs by a canonical serine protease mechanism, in which the side chain hydroxyl group of the serine supplies its oxygen atom to form the C-terminus of the beta chain, while the remainder of the serine residue undergoes an oxidative deamination to produce ammonia and the pyruvoyl prosthetic group on the alpha chain. During this reaction, the Ser that is part of the protease active site of the proenzyme becomes the pyruvoyl prosthetic group, which constitutes an essential element of the active site of the mature decarboxylase.</text>
</comment>
<comment type="similarity">
    <text evidence="1">Belongs to the phosphatidylserine decarboxylase family. PSD-B subfamily. Prokaryotic type I sub-subfamily.</text>
</comment>
<dbReference type="EC" id="4.1.1.65" evidence="1"/>
<dbReference type="EMBL" id="CP000247">
    <property type="protein sequence ID" value="ABG72348.1"/>
    <property type="molecule type" value="Genomic_DNA"/>
</dbReference>
<dbReference type="SMR" id="Q0T9N1"/>
<dbReference type="KEGG" id="ecp:ECP_4404"/>
<dbReference type="HOGENOM" id="CLU_029061_4_1_6"/>
<dbReference type="UniPathway" id="UPA00558">
    <property type="reaction ID" value="UER00616"/>
</dbReference>
<dbReference type="Proteomes" id="UP000009182">
    <property type="component" value="Chromosome"/>
</dbReference>
<dbReference type="GO" id="GO:0005886">
    <property type="term" value="C:plasma membrane"/>
    <property type="evidence" value="ECO:0007669"/>
    <property type="project" value="UniProtKB-SubCell"/>
</dbReference>
<dbReference type="GO" id="GO:0004609">
    <property type="term" value="F:phosphatidylserine decarboxylase activity"/>
    <property type="evidence" value="ECO:0007669"/>
    <property type="project" value="UniProtKB-UniRule"/>
</dbReference>
<dbReference type="GO" id="GO:0006646">
    <property type="term" value="P:phosphatidylethanolamine biosynthetic process"/>
    <property type="evidence" value="ECO:0007669"/>
    <property type="project" value="UniProtKB-UniRule"/>
</dbReference>
<dbReference type="HAMAP" id="MF_00662">
    <property type="entry name" value="PS_decarb_PSD_B_type1"/>
    <property type="match status" value="1"/>
</dbReference>
<dbReference type="InterPro" id="IPR003817">
    <property type="entry name" value="PS_Dcarbxylase"/>
</dbReference>
<dbReference type="InterPro" id="IPR033177">
    <property type="entry name" value="PSD-B"/>
</dbReference>
<dbReference type="InterPro" id="IPR033178">
    <property type="entry name" value="PSD_type1_pro"/>
</dbReference>
<dbReference type="NCBIfam" id="TIGR00163">
    <property type="entry name" value="PS_decarb"/>
    <property type="match status" value="1"/>
</dbReference>
<dbReference type="PANTHER" id="PTHR10067">
    <property type="entry name" value="PHOSPHATIDYLSERINE DECARBOXYLASE"/>
    <property type="match status" value="1"/>
</dbReference>
<dbReference type="PANTHER" id="PTHR10067:SF6">
    <property type="entry name" value="PHOSPHATIDYLSERINE DECARBOXYLASE PROENZYME, MITOCHONDRIAL"/>
    <property type="match status" value="1"/>
</dbReference>
<dbReference type="Pfam" id="PF02666">
    <property type="entry name" value="PS_Dcarbxylase"/>
    <property type="match status" value="1"/>
</dbReference>
<evidence type="ECO:0000255" key="1">
    <source>
        <dbReference type="HAMAP-Rule" id="MF_00662"/>
    </source>
</evidence>
<evidence type="ECO:0000256" key="2">
    <source>
        <dbReference type="SAM" id="MobiDB-lite"/>
    </source>
</evidence>
<accession>Q0T9N1</accession>
<keyword id="KW-1003">Cell membrane</keyword>
<keyword id="KW-0210">Decarboxylase</keyword>
<keyword id="KW-0444">Lipid biosynthesis</keyword>
<keyword id="KW-0443">Lipid metabolism</keyword>
<keyword id="KW-0456">Lyase</keyword>
<keyword id="KW-0472">Membrane</keyword>
<keyword id="KW-0594">Phospholipid biosynthesis</keyword>
<keyword id="KW-1208">Phospholipid metabolism</keyword>
<keyword id="KW-0670">Pyruvate</keyword>
<keyword id="KW-0865">Zymogen</keyword>
<reference key="1">
    <citation type="journal article" date="2006" name="Mol. Microbiol.">
        <title>Role of pathogenicity island-associated integrases in the genome plasticity of uropathogenic Escherichia coli strain 536.</title>
        <authorList>
            <person name="Hochhut B."/>
            <person name="Wilde C."/>
            <person name="Balling G."/>
            <person name="Middendorf B."/>
            <person name="Dobrindt U."/>
            <person name="Brzuszkiewicz E."/>
            <person name="Gottschalk G."/>
            <person name="Carniel E."/>
            <person name="Hacker J."/>
        </authorList>
    </citation>
    <scope>NUCLEOTIDE SEQUENCE [LARGE SCALE GENOMIC DNA]</scope>
    <source>
        <strain>536 / UPEC</strain>
    </source>
</reference>
<name>PSD_ECOL5</name>
<proteinExistence type="inferred from homology"/>